<protein>
    <recommendedName>
        <fullName>Cytochrome c oxidase subunit 2</fullName>
        <ecNumber>7.1.1.9</ecNumber>
    </recommendedName>
    <alternativeName>
        <fullName>Cytochrome c oxidase polypeptide II</fullName>
    </alternativeName>
</protein>
<sequence length="227" mass="26031">MAYPFQLGLXDATSPIMEELLHFHDHTLMIVFLISSLVLYIITLMLTTKLTHTSTMDAQEVETVWTILPAIILILIALPSLRILYMMDEINNPSLTVKTMGHQWYWSYEYTDYEDLNFDSYMIPTQELKPGELRLLEVDNRVVLPMEMTVRMLISSEDVLHSWAVPSLGLKTDAIPGRLNQTTLMAMRPGLYYGQCSEICGSNHSFMPIVLEMVPLSYFETWSAVMV</sequence>
<geneLocation type="mitochondrion"/>
<keyword id="KW-0186">Copper</keyword>
<keyword id="KW-0249">Electron transport</keyword>
<keyword id="KW-0460">Magnesium</keyword>
<keyword id="KW-0472">Membrane</keyword>
<keyword id="KW-0479">Metal-binding</keyword>
<keyword id="KW-0496">Mitochondrion</keyword>
<keyword id="KW-0999">Mitochondrion inner membrane</keyword>
<keyword id="KW-0597">Phosphoprotein</keyword>
<keyword id="KW-0679">Respiratory chain</keyword>
<keyword id="KW-1278">Translocase</keyword>
<keyword id="KW-0812">Transmembrane</keyword>
<keyword id="KW-1133">Transmembrane helix</keyword>
<keyword id="KW-0813">Transport</keyword>
<gene>
    <name type="primary">MT-CO2</name>
    <name type="synonym">COII</name>
    <name type="synonym">COX2</name>
    <name type="synonym">COXII</name>
    <name type="synonym">MTCO2</name>
</gene>
<accession>Q539C6</accession>
<dbReference type="EC" id="7.1.1.9"/>
<dbReference type="EMBL" id="AY609156">
    <property type="protein sequence ID" value="AAU44808.1"/>
    <property type="molecule type" value="Genomic_DNA"/>
</dbReference>
<dbReference type="GO" id="GO:0005743">
    <property type="term" value="C:mitochondrial inner membrane"/>
    <property type="evidence" value="ECO:0007669"/>
    <property type="project" value="UniProtKB-SubCell"/>
</dbReference>
<dbReference type="GO" id="GO:0045277">
    <property type="term" value="C:respiratory chain complex IV"/>
    <property type="evidence" value="ECO:0000250"/>
    <property type="project" value="UniProtKB"/>
</dbReference>
<dbReference type="GO" id="GO:0005507">
    <property type="term" value="F:copper ion binding"/>
    <property type="evidence" value="ECO:0007669"/>
    <property type="project" value="InterPro"/>
</dbReference>
<dbReference type="GO" id="GO:0004129">
    <property type="term" value="F:cytochrome-c oxidase activity"/>
    <property type="evidence" value="ECO:0007669"/>
    <property type="project" value="UniProtKB-EC"/>
</dbReference>
<dbReference type="GO" id="GO:0042773">
    <property type="term" value="P:ATP synthesis coupled electron transport"/>
    <property type="evidence" value="ECO:0007669"/>
    <property type="project" value="TreeGrafter"/>
</dbReference>
<dbReference type="CDD" id="cd13912">
    <property type="entry name" value="CcO_II_C"/>
    <property type="match status" value="1"/>
</dbReference>
<dbReference type="FunFam" id="1.10.287.90:FF:000001">
    <property type="entry name" value="Cytochrome c oxidase subunit 2"/>
    <property type="match status" value="1"/>
</dbReference>
<dbReference type="FunFam" id="2.60.40.420:FF:000001">
    <property type="entry name" value="Cytochrome c oxidase subunit 2"/>
    <property type="match status" value="1"/>
</dbReference>
<dbReference type="Gene3D" id="1.10.287.90">
    <property type="match status" value="1"/>
</dbReference>
<dbReference type="Gene3D" id="2.60.40.420">
    <property type="entry name" value="Cupredoxins - blue copper proteins"/>
    <property type="match status" value="1"/>
</dbReference>
<dbReference type="InterPro" id="IPR045187">
    <property type="entry name" value="CcO_II"/>
</dbReference>
<dbReference type="InterPro" id="IPR002429">
    <property type="entry name" value="CcO_II-like_C"/>
</dbReference>
<dbReference type="InterPro" id="IPR034210">
    <property type="entry name" value="CcO_II_C"/>
</dbReference>
<dbReference type="InterPro" id="IPR001505">
    <property type="entry name" value="Copper_CuA"/>
</dbReference>
<dbReference type="InterPro" id="IPR008972">
    <property type="entry name" value="Cupredoxin"/>
</dbReference>
<dbReference type="InterPro" id="IPR014222">
    <property type="entry name" value="Cyt_c_oxidase_su2"/>
</dbReference>
<dbReference type="InterPro" id="IPR011759">
    <property type="entry name" value="Cyt_c_oxidase_su2_TM_dom"/>
</dbReference>
<dbReference type="InterPro" id="IPR036257">
    <property type="entry name" value="Cyt_c_oxidase_su2_TM_sf"/>
</dbReference>
<dbReference type="NCBIfam" id="TIGR02866">
    <property type="entry name" value="CoxB"/>
    <property type="match status" value="1"/>
</dbReference>
<dbReference type="PANTHER" id="PTHR22888:SF9">
    <property type="entry name" value="CYTOCHROME C OXIDASE SUBUNIT 2"/>
    <property type="match status" value="1"/>
</dbReference>
<dbReference type="PANTHER" id="PTHR22888">
    <property type="entry name" value="CYTOCHROME C OXIDASE, SUBUNIT II"/>
    <property type="match status" value="1"/>
</dbReference>
<dbReference type="Pfam" id="PF00116">
    <property type="entry name" value="COX2"/>
    <property type="match status" value="1"/>
</dbReference>
<dbReference type="Pfam" id="PF02790">
    <property type="entry name" value="COX2_TM"/>
    <property type="match status" value="1"/>
</dbReference>
<dbReference type="PRINTS" id="PR01166">
    <property type="entry name" value="CYCOXIDASEII"/>
</dbReference>
<dbReference type="SUPFAM" id="SSF49503">
    <property type="entry name" value="Cupredoxins"/>
    <property type="match status" value="1"/>
</dbReference>
<dbReference type="SUPFAM" id="SSF81464">
    <property type="entry name" value="Cytochrome c oxidase subunit II-like, transmembrane region"/>
    <property type="match status" value="1"/>
</dbReference>
<dbReference type="PROSITE" id="PS00078">
    <property type="entry name" value="COX2"/>
    <property type="match status" value="1"/>
</dbReference>
<dbReference type="PROSITE" id="PS50857">
    <property type="entry name" value="COX2_CUA"/>
    <property type="match status" value="1"/>
</dbReference>
<dbReference type="PROSITE" id="PS50999">
    <property type="entry name" value="COX2_TM"/>
    <property type="match status" value="1"/>
</dbReference>
<evidence type="ECO:0000250" key="1">
    <source>
        <dbReference type="UniProtKB" id="P00403"/>
    </source>
</evidence>
<evidence type="ECO:0000250" key="2">
    <source>
        <dbReference type="UniProtKB" id="P00410"/>
    </source>
</evidence>
<evidence type="ECO:0000250" key="3">
    <source>
        <dbReference type="UniProtKB" id="P68530"/>
    </source>
</evidence>
<evidence type="ECO:0000305" key="4"/>
<name>COX2_VULCO</name>
<comment type="function">
    <text evidence="2">Component of the cytochrome c oxidase, the last enzyme in the mitochondrial electron transport chain which drives oxidative phosphorylation. The respiratory chain contains 3 multisubunit complexes succinate dehydrogenase (complex II, CII), ubiquinol-cytochrome c oxidoreductase (cytochrome b-c1 complex, complex III, CIII) and cytochrome c oxidase (complex IV, CIV), that cooperate to transfer electrons derived from NADH and succinate to molecular oxygen, creating an electrochemical gradient over the inner membrane that drives transmembrane transport and the ATP synthase. Cytochrome c oxidase is the component of the respiratory chain that catalyzes the reduction of oxygen to water. Electrons originating from reduced cytochrome c in the intermembrane space (IMS) are transferred via the dinuclear copper A center (CU(A)) of subunit 2 and heme A of subunit 1 to the active site in subunit 1, a binuclear center (BNC) formed by heme A3 and copper B (CU(B)). The BNC reduces molecular oxygen to 2 water molecules using 4 electrons from cytochrome c in the IMS and 4 protons from the mitochondrial matrix.</text>
</comment>
<comment type="catalytic activity">
    <reaction evidence="2">
        <text>4 Fe(II)-[cytochrome c] + O2 + 8 H(+)(in) = 4 Fe(III)-[cytochrome c] + 2 H2O + 4 H(+)(out)</text>
        <dbReference type="Rhea" id="RHEA:11436"/>
        <dbReference type="Rhea" id="RHEA-COMP:10350"/>
        <dbReference type="Rhea" id="RHEA-COMP:14399"/>
        <dbReference type="ChEBI" id="CHEBI:15377"/>
        <dbReference type="ChEBI" id="CHEBI:15378"/>
        <dbReference type="ChEBI" id="CHEBI:15379"/>
        <dbReference type="ChEBI" id="CHEBI:29033"/>
        <dbReference type="ChEBI" id="CHEBI:29034"/>
        <dbReference type="EC" id="7.1.1.9"/>
    </reaction>
    <physiologicalReaction direction="left-to-right" evidence="2">
        <dbReference type="Rhea" id="RHEA:11437"/>
    </physiologicalReaction>
</comment>
<comment type="cofactor">
    <cofactor evidence="3">
        <name>Cu cation</name>
        <dbReference type="ChEBI" id="CHEBI:23378"/>
    </cofactor>
    <text evidence="3">Binds a dinuclear copper A center per subunit.</text>
</comment>
<comment type="subunit">
    <text evidence="1 3">Component of the cytochrome c oxidase (complex IV, CIV), a multisubunit enzyme composed of 14 subunits. The complex is composed of a catalytic core of 3 subunits MT-CO1, MT-CO2 and MT-CO3, encoded in the mitochondrial DNA, and 11 supernumerary subunits COX4I, COX5A, COX5B, COX6A, COX6B, COX6C, COX7A, COX7B, COX7C, COX8 and NDUFA4, which are encoded in the nuclear genome. The complex exists as a monomer or a dimer and forms supercomplexes (SCs) in the inner mitochondrial membrane with NADH-ubiquinone oxidoreductase (complex I, CI) and ubiquinol-cytochrome c oxidoreductase (cytochrome b-c1 complex, complex III, CIII), resulting in different assemblies (supercomplex SCI(1)III(2)IV(1) and megacomplex MCI(2)III(2)IV(2)) (By similarity). Found in a complex with TMEM177, COA6, COX18, COX20, SCO1 and SCO2. Interacts with TMEM177 in a COX20-dependent manner. Interacts with COX20. Interacts with COX16 (By similarity).</text>
</comment>
<comment type="subcellular location">
    <subcellularLocation>
        <location evidence="3">Mitochondrion inner membrane</location>
        <topology evidence="3">Multi-pass membrane protein</topology>
    </subcellularLocation>
</comment>
<comment type="similarity">
    <text evidence="4">Belongs to the cytochrome c oxidase subunit 2 family.</text>
</comment>
<proteinExistence type="inferred from homology"/>
<reference key="1">
    <citation type="journal article" date="2005" name="Mol. Biol. Evol.">
        <title>Isolation and molecular evolution of the selenocysteine tRNA (Cf TRSP) and RNase P RNA (Cf RPPH1) genes in the dog family, Canidae.</title>
        <authorList>
            <person name="Bardeleben C."/>
            <person name="Moore R.L."/>
            <person name="Wayne R.K."/>
        </authorList>
    </citation>
    <scope>NUCLEOTIDE SEQUENCE [GENOMIC DNA]</scope>
    <source>
        <strain>Isolate VCO490</strain>
    </source>
</reference>
<organism>
    <name type="scientific">Vulpes corsac</name>
    <name type="common">Corsac fox</name>
    <dbReference type="NCBI Taxonomy" id="9629"/>
    <lineage>
        <taxon>Eukaryota</taxon>
        <taxon>Metazoa</taxon>
        <taxon>Chordata</taxon>
        <taxon>Craniata</taxon>
        <taxon>Vertebrata</taxon>
        <taxon>Euteleostomi</taxon>
        <taxon>Mammalia</taxon>
        <taxon>Eutheria</taxon>
        <taxon>Laurasiatheria</taxon>
        <taxon>Carnivora</taxon>
        <taxon>Caniformia</taxon>
        <taxon>Canidae</taxon>
        <taxon>Vulpes</taxon>
    </lineage>
</organism>
<feature type="chain" id="PRO_0000235178" description="Cytochrome c oxidase subunit 2">
    <location>
        <begin position="1"/>
        <end position="227"/>
    </location>
</feature>
<feature type="topological domain" description="Mitochondrial intermembrane" evidence="3">
    <location>
        <begin position="1"/>
        <end position="14"/>
    </location>
</feature>
<feature type="transmembrane region" description="Helical; Name=I" evidence="3">
    <location>
        <begin position="15"/>
        <end position="45"/>
    </location>
</feature>
<feature type="topological domain" description="Mitochondrial matrix" evidence="3">
    <location>
        <begin position="46"/>
        <end position="59"/>
    </location>
</feature>
<feature type="transmembrane region" description="Helical; Name=II" evidence="3">
    <location>
        <begin position="60"/>
        <end position="87"/>
    </location>
</feature>
<feature type="topological domain" description="Mitochondrial intermembrane" evidence="3">
    <location>
        <begin position="88"/>
        <end position="227"/>
    </location>
</feature>
<feature type="binding site" evidence="3">
    <location>
        <position position="161"/>
    </location>
    <ligand>
        <name>Cu cation</name>
        <dbReference type="ChEBI" id="CHEBI:23378"/>
        <label>A1</label>
    </ligand>
</feature>
<feature type="binding site" evidence="3">
    <location>
        <position position="196"/>
    </location>
    <ligand>
        <name>Cu cation</name>
        <dbReference type="ChEBI" id="CHEBI:23378"/>
        <label>A1</label>
    </ligand>
</feature>
<feature type="binding site" evidence="3">
    <location>
        <position position="196"/>
    </location>
    <ligand>
        <name>Cu cation</name>
        <dbReference type="ChEBI" id="CHEBI:23378"/>
        <label>A2</label>
    </ligand>
</feature>
<feature type="binding site" evidence="3">
    <location>
        <position position="198"/>
    </location>
    <ligand>
        <name>Cu cation</name>
        <dbReference type="ChEBI" id="CHEBI:23378"/>
        <label>A2</label>
    </ligand>
</feature>
<feature type="binding site" evidence="3">
    <location>
        <position position="198"/>
    </location>
    <ligand>
        <name>Mg(2+)</name>
        <dbReference type="ChEBI" id="CHEBI:18420"/>
        <note>ligand shared with MT-CO1</note>
    </ligand>
</feature>
<feature type="binding site" evidence="3">
    <location>
        <position position="200"/>
    </location>
    <ligand>
        <name>Cu cation</name>
        <dbReference type="ChEBI" id="CHEBI:23378"/>
        <label>A1</label>
    </ligand>
</feature>
<feature type="binding site" evidence="3">
    <location>
        <position position="200"/>
    </location>
    <ligand>
        <name>Cu cation</name>
        <dbReference type="ChEBI" id="CHEBI:23378"/>
        <label>A2</label>
    </ligand>
</feature>
<feature type="binding site" evidence="3">
    <location>
        <position position="204"/>
    </location>
    <ligand>
        <name>Cu cation</name>
        <dbReference type="ChEBI" id="CHEBI:23378"/>
        <label>A2</label>
    </ligand>
</feature>
<feature type="binding site" evidence="3">
    <location>
        <position position="207"/>
    </location>
    <ligand>
        <name>Cu cation</name>
        <dbReference type="ChEBI" id="CHEBI:23378"/>
        <label>A1</label>
    </ligand>
</feature>